<feature type="chain" id="PRO_0000327818" description="Protein Dr1 homolog">
    <location>
        <begin position="1"/>
        <end position="178"/>
    </location>
</feature>
<feature type="region of interest" description="Disordered" evidence="2">
    <location>
        <begin position="139"/>
        <end position="178"/>
    </location>
</feature>
<proteinExistence type="inferred from homology"/>
<gene>
    <name type="primary">dr1</name>
    <name type="ORF">DDB_G0269638</name>
</gene>
<name>NC2B_DICDI</name>
<protein>
    <recommendedName>
        <fullName>Protein Dr1 homolog</fullName>
    </recommendedName>
    <alternativeName>
        <fullName>Negative cofactor 2-beta homolog</fullName>
        <shortName>NC2-beta homolog</shortName>
    </alternativeName>
</protein>
<reference key="1">
    <citation type="journal article" date="2005" name="Nature">
        <title>The genome of the social amoeba Dictyostelium discoideum.</title>
        <authorList>
            <person name="Eichinger L."/>
            <person name="Pachebat J.A."/>
            <person name="Gloeckner G."/>
            <person name="Rajandream M.A."/>
            <person name="Sucgang R."/>
            <person name="Berriman M."/>
            <person name="Song J."/>
            <person name="Olsen R."/>
            <person name="Szafranski K."/>
            <person name="Xu Q."/>
            <person name="Tunggal B."/>
            <person name="Kummerfeld S."/>
            <person name="Madera M."/>
            <person name="Konfortov B.A."/>
            <person name="Rivero F."/>
            <person name="Bankier A.T."/>
            <person name="Lehmann R."/>
            <person name="Hamlin N."/>
            <person name="Davies R."/>
            <person name="Gaudet P."/>
            <person name="Fey P."/>
            <person name="Pilcher K."/>
            <person name="Chen G."/>
            <person name="Saunders D."/>
            <person name="Sodergren E.J."/>
            <person name="Davis P."/>
            <person name="Kerhornou A."/>
            <person name="Nie X."/>
            <person name="Hall N."/>
            <person name="Anjard C."/>
            <person name="Hemphill L."/>
            <person name="Bason N."/>
            <person name="Farbrother P."/>
            <person name="Desany B."/>
            <person name="Just E."/>
            <person name="Morio T."/>
            <person name="Rost R."/>
            <person name="Churcher C.M."/>
            <person name="Cooper J."/>
            <person name="Haydock S."/>
            <person name="van Driessche N."/>
            <person name="Cronin A."/>
            <person name="Goodhead I."/>
            <person name="Muzny D.M."/>
            <person name="Mourier T."/>
            <person name="Pain A."/>
            <person name="Lu M."/>
            <person name="Harper D."/>
            <person name="Lindsay R."/>
            <person name="Hauser H."/>
            <person name="James K.D."/>
            <person name="Quiles M."/>
            <person name="Madan Babu M."/>
            <person name="Saito T."/>
            <person name="Buchrieser C."/>
            <person name="Wardroper A."/>
            <person name="Felder M."/>
            <person name="Thangavelu M."/>
            <person name="Johnson D."/>
            <person name="Knights A."/>
            <person name="Loulseged H."/>
            <person name="Mungall K.L."/>
            <person name="Oliver K."/>
            <person name="Price C."/>
            <person name="Quail M.A."/>
            <person name="Urushihara H."/>
            <person name="Hernandez J."/>
            <person name="Rabbinowitsch E."/>
            <person name="Steffen D."/>
            <person name="Sanders M."/>
            <person name="Ma J."/>
            <person name="Kohara Y."/>
            <person name="Sharp S."/>
            <person name="Simmonds M.N."/>
            <person name="Spiegler S."/>
            <person name="Tivey A."/>
            <person name="Sugano S."/>
            <person name="White B."/>
            <person name="Walker D."/>
            <person name="Woodward J.R."/>
            <person name="Winckler T."/>
            <person name="Tanaka Y."/>
            <person name="Shaulsky G."/>
            <person name="Schleicher M."/>
            <person name="Weinstock G.M."/>
            <person name="Rosenthal A."/>
            <person name="Cox E.C."/>
            <person name="Chisholm R.L."/>
            <person name="Gibbs R.A."/>
            <person name="Loomis W.F."/>
            <person name="Platzer M."/>
            <person name="Kay R.R."/>
            <person name="Williams J.G."/>
            <person name="Dear P.H."/>
            <person name="Noegel A.A."/>
            <person name="Barrell B.G."/>
            <person name="Kuspa A."/>
        </authorList>
    </citation>
    <scope>NUCLEOTIDE SEQUENCE [LARGE SCALE GENOMIC DNA]</scope>
    <source>
        <strain>AX4</strain>
    </source>
</reference>
<keyword id="KW-0238">DNA-binding</keyword>
<keyword id="KW-0539">Nucleus</keyword>
<keyword id="KW-1185">Reference proteome</keyword>
<keyword id="KW-0678">Repressor</keyword>
<keyword id="KW-0804">Transcription</keyword>
<keyword id="KW-0805">Transcription regulation</keyword>
<dbReference type="EMBL" id="AAFI02000005">
    <property type="protein sequence ID" value="EAL72169.1"/>
    <property type="molecule type" value="Genomic_DNA"/>
</dbReference>
<dbReference type="RefSeq" id="XP_646136.1">
    <property type="nucleotide sequence ID" value="XM_641044.1"/>
</dbReference>
<dbReference type="SMR" id="Q55DJ5"/>
<dbReference type="FunCoup" id="Q55DJ5">
    <property type="interactions" value="772"/>
</dbReference>
<dbReference type="STRING" id="44689.Q55DJ5"/>
<dbReference type="PaxDb" id="44689-DDB0216393"/>
<dbReference type="EnsemblProtists" id="EAL72169">
    <property type="protein sequence ID" value="EAL72169"/>
    <property type="gene ID" value="DDB_G0269638"/>
</dbReference>
<dbReference type="GeneID" id="8617086"/>
<dbReference type="KEGG" id="ddi:DDB_G0269638"/>
<dbReference type="dictyBase" id="DDB_G0269638">
    <property type="gene designation" value="dr1"/>
</dbReference>
<dbReference type="VEuPathDB" id="AmoebaDB:DDB_G0269638"/>
<dbReference type="eggNOG" id="KOG0871">
    <property type="taxonomic scope" value="Eukaryota"/>
</dbReference>
<dbReference type="HOGENOM" id="CLU_066247_11_1_1"/>
<dbReference type="InParanoid" id="Q55DJ5"/>
<dbReference type="OMA" id="NDICGRE"/>
<dbReference type="PhylomeDB" id="Q55DJ5"/>
<dbReference type="PRO" id="PR:Q55DJ5"/>
<dbReference type="Proteomes" id="UP000002195">
    <property type="component" value="Chromosome 1"/>
</dbReference>
<dbReference type="GO" id="GO:0017054">
    <property type="term" value="C:negative cofactor 2 complex"/>
    <property type="evidence" value="ECO:0000318"/>
    <property type="project" value="GO_Central"/>
</dbReference>
<dbReference type="GO" id="GO:0003677">
    <property type="term" value="F:DNA binding"/>
    <property type="evidence" value="ECO:0007669"/>
    <property type="project" value="UniProtKB-KW"/>
</dbReference>
<dbReference type="GO" id="GO:0046982">
    <property type="term" value="F:protein heterodimerization activity"/>
    <property type="evidence" value="ECO:0007669"/>
    <property type="project" value="InterPro"/>
</dbReference>
<dbReference type="GO" id="GO:0016251">
    <property type="term" value="F:RNA polymerase II general transcription initiation factor activity"/>
    <property type="evidence" value="ECO:0000318"/>
    <property type="project" value="GO_Central"/>
</dbReference>
<dbReference type="GO" id="GO:0017025">
    <property type="term" value="F:TBP-class protein binding"/>
    <property type="evidence" value="ECO:0000318"/>
    <property type="project" value="GO_Central"/>
</dbReference>
<dbReference type="GO" id="GO:0000122">
    <property type="term" value="P:negative regulation of transcription by RNA polymerase II"/>
    <property type="evidence" value="ECO:0007669"/>
    <property type="project" value="InterPro"/>
</dbReference>
<dbReference type="GO" id="GO:0051123">
    <property type="term" value="P:RNA polymerase II preinitiation complex assembly"/>
    <property type="evidence" value="ECO:0000318"/>
    <property type="project" value="GO_Central"/>
</dbReference>
<dbReference type="CDD" id="cd22905">
    <property type="entry name" value="HFD_Dr1"/>
    <property type="match status" value="1"/>
</dbReference>
<dbReference type="FunFam" id="1.10.20.10:FF:000019">
    <property type="entry name" value="Negative cofactor 2 beta"/>
    <property type="match status" value="1"/>
</dbReference>
<dbReference type="Gene3D" id="1.10.20.10">
    <property type="entry name" value="Histone, subunit A"/>
    <property type="match status" value="1"/>
</dbReference>
<dbReference type="InterPro" id="IPR003958">
    <property type="entry name" value="CBFA_NFYB_domain"/>
</dbReference>
<dbReference type="InterPro" id="IPR009072">
    <property type="entry name" value="Histone-fold"/>
</dbReference>
<dbReference type="InterPro" id="IPR042225">
    <property type="entry name" value="Ncb2"/>
</dbReference>
<dbReference type="PANTHER" id="PTHR46138">
    <property type="entry name" value="PROTEIN DR1"/>
    <property type="match status" value="1"/>
</dbReference>
<dbReference type="PANTHER" id="PTHR46138:SF1">
    <property type="entry name" value="PROTEIN DR1"/>
    <property type="match status" value="1"/>
</dbReference>
<dbReference type="Pfam" id="PF00808">
    <property type="entry name" value="CBFD_NFYB_HMF"/>
    <property type="match status" value="1"/>
</dbReference>
<dbReference type="SUPFAM" id="SSF47113">
    <property type="entry name" value="Histone-fold"/>
    <property type="match status" value="1"/>
</dbReference>
<accession>Q55DJ5</accession>
<organism>
    <name type="scientific">Dictyostelium discoideum</name>
    <name type="common">Social amoeba</name>
    <dbReference type="NCBI Taxonomy" id="44689"/>
    <lineage>
        <taxon>Eukaryota</taxon>
        <taxon>Amoebozoa</taxon>
        <taxon>Evosea</taxon>
        <taxon>Eumycetozoa</taxon>
        <taxon>Dictyostelia</taxon>
        <taxon>Dictyosteliales</taxon>
        <taxon>Dictyosteliaceae</taxon>
        <taxon>Dictyostelium</taxon>
    </lineage>
</organism>
<comment type="function">
    <text evidence="1">Involved in transcriptional regulation. Component of the NC2 complex which represses RNA polymerase II transcription through binding to tbp and thereby inhibiting the assembly of the preinitiation complex (By similarity).</text>
</comment>
<comment type="subunit">
    <text evidence="1">Heterodimer with drap1 to form the negative cofactor 2 (NC2) complex.</text>
</comment>
<comment type="subcellular location">
    <subcellularLocation>
        <location evidence="1">Nucleus</location>
    </subcellularLocation>
</comment>
<comment type="similarity">
    <text evidence="3">Belongs to the NC2 beta/DR1 family.</text>
</comment>
<evidence type="ECO:0000250" key="1"/>
<evidence type="ECO:0000256" key="2">
    <source>
        <dbReference type="SAM" id="MobiDB-lite"/>
    </source>
</evidence>
<evidence type="ECO:0000305" key="3"/>
<sequence>MGDKNDKEDNLSLPKATVSKLIKEMLPQDVKCSNETRDLILECCVEFIHLISSEANDICGREQKRTIAAEHVIKALTELGFSDYTQKVSDVYDKHKLEVSTKSKSSKKFENLGKPTEQLIREQQLLFAKARSAFQASPEAQQLQQLQQQQQQQQGGLQAPSVQQQTDINTTTTSTIQK</sequence>